<accession>A5F384</accession>
<accession>C3LYK3</accession>
<accession>P29492</accession>
<accession>Q9KTQ8</accession>
<dbReference type="EMBL" id="AF325733">
    <property type="protein sequence ID" value="AAK20765.1"/>
    <property type="molecule type" value="Genomic_DNA"/>
</dbReference>
<dbReference type="EMBL" id="CP000627">
    <property type="protein sequence ID" value="ABQ20018.1"/>
    <property type="molecule type" value="Genomic_DNA"/>
</dbReference>
<dbReference type="EMBL" id="CP001235">
    <property type="protein sequence ID" value="ACP08869.1"/>
    <property type="molecule type" value="Genomic_DNA"/>
</dbReference>
<dbReference type="RefSeq" id="WP_000579582.1">
    <property type="nucleotide sequence ID" value="NZ_JAACZH010000023.1"/>
</dbReference>
<dbReference type="PDB" id="3GBG">
    <property type="method" value="X-ray"/>
    <property type="resolution" value="1.90 A"/>
    <property type="chains" value="A=1-276"/>
</dbReference>
<dbReference type="PDB" id="5SUW">
    <property type="method" value="X-ray"/>
    <property type="resolution" value="2.30 A"/>
    <property type="chains" value="A=1-276"/>
</dbReference>
<dbReference type="PDBsum" id="3GBG"/>
<dbReference type="PDBsum" id="5SUW"/>
<dbReference type="SMR" id="A5F384"/>
<dbReference type="ChEMBL" id="CHEMBL4105813"/>
<dbReference type="KEGG" id="vco:VC0395_A0363"/>
<dbReference type="KEGG" id="vcr:VC395_0854"/>
<dbReference type="PATRIC" id="fig|345073.21.peg.826"/>
<dbReference type="eggNOG" id="COG2207">
    <property type="taxonomic scope" value="Bacteria"/>
</dbReference>
<dbReference type="HOGENOM" id="CLU_1004526_0_0_6"/>
<dbReference type="OrthoDB" id="2547276at2"/>
<dbReference type="EvolutionaryTrace" id="A5F384"/>
<dbReference type="Proteomes" id="UP000000249">
    <property type="component" value="Chromosome 2"/>
</dbReference>
<dbReference type="CollecTF" id="EXPREG_00000240"/>
<dbReference type="GO" id="GO:0005737">
    <property type="term" value="C:cytoplasm"/>
    <property type="evidence" value="ECO:0007669"/>
    <property type="project" value="UniProtKB-SubCell"/>
</dbReference>
<dbReference type="GO" id="GO:0032993">
    <property type="term" value="C:protein-DNA complex"/>
    <property type="evidence" value="ECO:0000315"/>
    <property type="project" value="CollecTF"/>
</dbReference>
<dbReference type="GO" id="GO:0001216">
    <property type="term" value="F:DNA-binding transcription activator activity"/>
    <property type="evidence" value="ECO:0000315"/>
    <property type="project" value="CollecTF"/>
</dbReference>
<dbReference type="GO" id="GO:0001217">
    <property type="term" value="F:DNA-binding transcription repressor activity"/>
    <property type="evidence" value="ECO:0000315"/>
    <property type="project" value="CollecTF"/>
</dbReference>
<dbReference type="GO" id="GO:0000976">
    <property type="term" value="F:transcription cis-regulatory region binding"/>
    <property type="evidence" value="ECO:0000315"/>
    <property type="project" value="CollecTF"/>
</dbReference>
<dbReference type="GO" id="GO:0045893">
    <property type="term" value="P:positive regulation of DNA-templated transcription"/>
    <property type="evidence" value="ECO:0000314"/>
    <property type="project" value="CollecTF"/>
</dbReference>
<dbReference type="DisProt" id="DP01439"/>
<dbReference type="Gene3D" id="2.60.120.810">
    <property type="match status" value="1"/>
</dbReference>
<dbReference type="Gene3D" id="1.10.10.60">
    <property type="entry name" value="Homeodomain-like"/>
    <property type="match status" value="1"/>
</dbReference>
<dbReference type="Gene3D" id="1.10.10.1310">
    <property type="entry name" value="ToxT, HTH1 motif"/>
    <property type="match status" value="1"/>
</dbReference>
<dbReference type="InterPro" id="IPR009057">
    <property type="entry name" value="Homeodomain-like_sf"/>
</dbReference>
<dbReference type="InterPro" id="IPR018060">
    <property type="entry name" value="HTH_AraC"/>
</dbReference>
<dbReference type="InterPro" id="IPR018062">
    <property type="entry name" value="HTH_AraC-typ_CS"/>
</dbReference>
<dbReference type="InterPro" id="IPR044875">
    <property type="entry name" value="ToxT_HTH1"/>
</dbReference>
<dbReference type="InterPro" id="IPR055025">
    <property type="entry name" value="ToxT_N"/>
</dbReference>
<dbReference type="InterPro" id="IPR020449">
    <property type="entry name" value="Tscrpt_reg_AraC-type_HTH"/>
</dbReference>
<dbReference type="PANTHER" id="PTHR43280">
    <property type="entry name" value="ARAC-FAMILY TRANSCRIPTIONAL REGULATOR"/>
    <property type="match status" value="1"/>
</dbReference>
<dbReference type="PANTHER" id="PTHR43280:SF28">
    <property type="entry name" value="HTH-TYPE TRANSCRIPTIONAL ACTIVATOR RHAS"/>
    <property type="match status" value="1"/>
</dbReference>
<dbReference type="Pfam" id="PF00165">
    <property type="entry name" value="HTH_AraC"/>
    <property type="match status" value="1"/>
</dbReference>
<dbReference type="Pfam" id="PF22404">
    <property type="entry name" value="ToxT_N"/>
    <property type="match status" value="1"/>
</dbReference>
<dbReference type="PRINTS" id="PR00032">
    <property type="entry name" value="HTHARAC"/>
</dbReference>
<dbReference type="SMART" id="SM00342">
    <property type="entry name" value="HTH_ARAC"/>
    <property type="match status" value="1"/>
</dbReference>
<dbReference type="SUPFAM" id="SSF46689">
    <property type="entry name" value="Homeodomain-like"/>
    <property type="match status" value="1"/>
</dbReference>
<dbReference type="PROSITE" id="PS00041">
    <property type="entry name" value="HTH_ARAC_FAMILY_1"/>
    <property type="match status" value="1"/>
</dbReference>
<dbReference type="PROSITE" id="PS01124">
    <property type="entry name" value="HTH_ARAC_FAMILY_2"/>
    <property type="match status" value="1"/>
</dbReference>
<evidence type="ECO:0000250" key="1"/>
<evidence type="ECO:0000255" key="2">
    <source>
        <dbReference type="PROSITE-ProRule" id="PRU00593"/>
    </source>
</evidence>
<evidence type="ECO:0007829" key="3">
    <source>
        <dbReference type="PDB" id="3GBG"/>
    </source>
</evidence>
<evidence type="ECO:0007829" key="4">
    <source>
        <dbReference type="PDB" id="5SUW"/>
    </source>
</evidence>
<sequence>MIGKKSFQTNVYRMSKFDTYIFNNLYINDYKMFWIDSGIAKLIDKNCLVSYEINSSSIILLKKNSIQRFSLTSLSDENINVSVITISDSFIRSLKSYILGDLMIRNLYSENKDLLLWNCEHNDIAVLSEVVNGFREINYSDEFLKVFFSGFFSKVEKKYNSIFITDDLDAMEKISCLVKSDITRNWRWADICGELRTNRMILKKELESRGVKFRELINSIRISYSISLMKTGEFKIKQIAYQSGFASVSYFSTVFKSTMNVAPSEYLFMLTGVAEK</sequence>
<comment type="function">
    <text evidence="1">Probable regulatory protein for the tcp operon.</text>
</comment>
<comment type="subcellular location">
    <subcellularLocation>
        <location evidence="1">Cytoplasm</location>
    </subcellularLocation>
</comment>
<name>TCPN_VIBC3</name>
<gene>
    <name type="primary">tcpN</name>
    <name type="synonym">toxT</name>
    <name type="ordered locus">VC0395_A0363</name>
    <name type="ordered locus">VC395_0854</name>
</gene>
<reference key="1">
    <citation type="journal article" date="2001" name="Infect. Immun.">
        <title>Comparison of Vibrio cholerae pathogenicity islands in sixth and seventh pandemic strains.</title>
        <authorList>
            <person name="Karaolis D.K.R."/>
            <person name="Lan R."/>
            <person name="Kaper J.B."/>
            <person name="Reeves P.R."/>
        </authorList>
    </citation>
    <scope>NUCLEOTIDE SEQUENCE [GENOMIC DNA]</scope>
</reference>
<reference key="2">
    <citation type="submission" date="2007-03" db="EMBL/GenBank/DDBJ databases">
        <authorList>
            <person name="Heidelberg J."/>
        </authorList>
    </citation>
    <scope>NUCLEOTIDE SEQUENCE [LARGE SCALE GENOMIC DNA]</scope>
    <source>
        <strain>ATCC 39541 / Classical Ogawa 395 / O395</strain>
    </source>
</reference>
<reference key="3">
    <citation type="journal article" date="2008" name="PLoS ONE">
        <title>A recalibrated molecular clock and independent origins for the cholera pandemic clones.</title>
        <authorList>
            <person name="Feng L."/>
            <person name="Reeves P.R."/>
            <person name="Lan R."/>
            <person name="Ren Y."/>
            <person name="Gao C."/>
            <person name="Zhou Z."/>
            <person name="Ren Y."/>
            <person name="Cheng J."/>
            <person name="Wang W."/>
            <person name="Wang J."/>
            <person name="Qian W."/>
            <person name="Li D."/>
            <person name="Wang L."/>
        </authorList>
    </citation>
    <scope>NUCLEOTIDE SEQUENCE [LARGE SCALE GENOMIC DNA]</scope>
    <source>
        <strain>ATCC 39541 / Classical Ogawa 395 / O395</strain>
    </source>
</reference>
<proteinExistence type="evidence at protein level"/>
<keyword id="KW-0002">3D-structure</keyword>
<keyword id="KW-0010">Activator</keyword>
<keyword id="KW-0963">Cytoplasm</keyword>
<keyword id="KW-0238">DNA-binding</keyword>
<keyword id="KW-0804">Transcription</keyword>
<keyword id="KW-0805">Transcription regulation</keyword>
<keyword id="KW-0843">Virulence</keyword>
<protein>
    <recommendedName>
        <fullName>TCP pilus virulence regulatory protein</fullName>
    </recommendedName>
</protein>
<organism>
    <name type="scientific">Vibrio cholerae serotype O1 (strain ATCC 39541 / Classical Ogawa 395 / O395)</name>
    <dbReference type="NCBI Taxonomy" id="345073"/>
    <lineage>
        <taxon>Bacteria</taxon>
        <taxon>Pseudomonadati</taxon>
        <taxon>Pseudomonadota</taxon>
        <taxon>Gammaproteobacteria</taxon>
        <taxon>Vibrionales</taxon>
        <taxon>Vibrionaceae</taxon>
        <taxon>Vibrio</taxon>
    </lineage>
</organism>
<feature type="chain" id="PRO_0000321859" description="TCP pilus virulence regulatory protein">
    <location>
        <begin position="1"/>
        <end position="276"/>
    </location>
</feature>
<feature type="domain" description="HTH araC/xylS-type" evidence="2">
    <location>
        <begin position="172"/>
        <end position="269"/>
    </location>
</feature>
<feature type="DNA-binding region" description="H-T-H motif" evidence="2">
    <location>
        <begin position="189"/>
        <end position="210"/>
    </location>
</feature>
<feature type="DNA-binding region" description="H-T-H motif" evidence="2">
    <location>
        <begin position="236"/>
        <end position="259"/>
    </location>
</feature>
<feature type="strand" evidence="3">
    <location>
        <begin position="7"/>
        <end position="14"/>
    </location>
</feature>
<feature type="strand" evidence="3">
    <location>
        <begin position="19"/>
        <end position="26"/>
    </location>
</feature>
<feature type="strand" evidence="3">
    <location>
        <begin position="31"/>
        <end position="38"/>
    </location>
</feature>
<feature type="strand" evidence="3">
    <location>
        <begin position="40"/>
        <end position="44"/>
    </location>
</feature>
<feature type="turn" evidence="3">
    <location>
        <begin position="45"/>
        <end position="48"/>
    </location>
</feature>
<feature type="strand" evidence="3">
    <location>
        <begin position="49"/>
        <end position="53"/>
    </location>
</feature>
<feature type="strand" evidence="3">
    <location>
        <begin position="57"/>
        <end position="61"/>
    </location>
</feature>
<feature type="strand" evidence="3">
    <location>
        <begin position="66"/>
        <end position="73"/>
    </location>
</feature>
<feature type="strand" evidence="3">
    <location>
        <begin position="79"/>
        <end position="86"/>
    </location>
</feature>
<feature type="helix" evidence="3">
    <location>
        <begin position="88"/>
        <end position="97"/>
    </location>
</feature>
<feature type="helix" evidence="4">
    <location>
        <begin position="99"/>
        <end position="101"/>
    </location>
</feature>
<feature type="helix" evidence="4">
    <location>
        <begin position="102"/>
        <end position="105"/>
    </location>
</feature>
<feature type="strand" evidence="3">
    <location>
        <begin position="114"/>
        <end position="118"/>
    </location>
</feature>
<feature type="helix" evidence="3">
    <location>
        <begin position="123"/>
        <end position="131"/>
    </location>
</feature>
<feature type="turn" evidence="3">
    <location>
        <begin position="132"/>
        <end position="134"/>
    </location>
</feature>
<feature type="helix" evidence="3">
    <location>
        <begin position="141"/>
        <end position="155"/>
    </location>
</feature>
<feature type="turn" evidence="3">
    <location>
        <begin position="156"/>
        <end position="158"/>
    </location>
</feature>
<feature type="strand" evidence="3">
    <location>
        <begin position="159"/>
        <end position="161"/>
    </location>
</feature>
<feature type="helix" evidence="3">
    <location>
        <begin position="170"/>
        <end position="180"/>
    </location>
</feature>
<feature type="turn" evidence="3">
    <location>
        <begin position="181"/>
        <end position="183"/>
    </location>
</feature>
<feature type="helix" evidence="3">
    <location>
        <begin position="188"/>
        <end position="195"/>
    </location>
</feature>
<feature type="helix" evidence="3">
    <location>
        <begin position="199"/>
        <end position="207"/>
    </location>
</feature>
<feature type="turn" evidence="3">
    <location>
        <begin position="208"/>
        <end position="210"/>
    </location>
</feature>
<feature type="helix" evidence="3">
    <location>
        <begin position="213"/>
        <end position="230"/>
    </location>
</feature>
<feature type="helix" evidence="3">
    <location>
        <begin position="236"/>
        <end position="242"/>
    </location>
</feature>
<feature type="helix" evidence="3">
    <location>
        <begin position="248"/>
        <end position="259"/>
    </location>
</feature>
<feature type="helix" evidence="3">
    <location>
        <begin position="263"/>
        <end position="269"/>
    </location>
</feature>